<comment type="function">
    <text evidence="1">Part of the MIS12 complex which is required for normal chromosome alignment and segregation and kinetochore formation during mitosis.</text>
</comment>
<comment type="subunit">
    <text evidence="1">Component of the MIS12 complex composed of MIS12, DSN1, NSL1/DC8 and PMF1. Interacts with KNL1 (By similarity).</text>
</comment>
<comment type="subcellular location">
    <subcellularLocation>
        <location evidence="2">Nucleus</location>
    </subcellularLocation>
    <subcellularLocation>
        <location evidence="2">Chromosome</location>
        <location evidence="2">Centromere</location>
        <location evidence="2">Kinetochore</location>
    </subcellularLocation>
    <text evidence="2">Associated with the kinetochore.</text>
</comment>
<name>NSL1_MOUSE</name>
<sequence length="281" mass="31739">MAAVSETVLVSAPQDHDAQAASDPQATAADSPLEDFRVRCTLKRAVMEVMEMCGRFVQELGAVLPEDVRELALRDAQWTFESAVQENVSFNGQAWEEAKEHGLMDSDIKVLEDEFDELIVDVATKRRQYPRRILESVIKTLKAQHASLKQYHPVVHPLDLKCDPDPASRVEDLKCRGEAIAKEMSEAMKALPVLIEQGEGFSQVLKMRPVIQLQRINQEVFSSLYRKADFKPDTCVTHVETTPAETGARKASNIVLKRKKAPDCAQRKRYPLRLQRINLDM</sequence>
<evidence type="ECO:0000250" key="1"/>
<evidence type="ECO:0000250" key="2">
    <source>
        <dbReference type="UniProtKB" id="Q96IY1"/>
    </source>
</evidence>
<evidence type="ECO:0000256" key="3">
    <source>
        <dbReference type="SAM" id="MobiDB-lite"/>
    </source>
</evidence>
<protein>
    <recommendedName>
        <fullName>Kinetochore-associated protein NSL1 homolog</fullName>
    </recommendedName>
</protein>
<reference key="1">
    <citation type="journal article" date="2004" name="Genome Res.">
        <title>The status, quality, and expansion of the NIH full-length cDNA project: the Mammalian Gene Collection (MGC).</title>
        <authorList>
            <consortium name="The MGC Project Team"/>
        </authorList>
    </citation>
    <scope>NUCLEOTIDE SEQUENCE [LARGE SCALE MRNA]</scope>
    <source>
        <strain>FVB/N</strain>
    </source>
</reference>
<accession>Q8K305</accession>
<dbReference type="EMBL" id="BC029086">
    <property type="protein sequence ID" value="AAH29086.1"/>
    <property type="molecule type" value="mRNA"/>
</dbReference>
<dbReference type="CCDS" id="CCDS15614.1"/>
<dbReference type="SMR" id="Q8K305"/>
<dbReference type="ComplexPortal" id="CPX-5701">
    <property type="entry name" value="Kinetochore MIS12 complex"/>
</dbReference>
<dbReference type="FunCoup" id="Q8K305">
    <property type="interactions" value="1069"/>
</dbReference>
<dbReference type="STRING" id="10090.ENSMUSP00000077380"/>
<dbReference type="iPTMnet" id="Q8K305"/>
<dbReference type="PhosphoSitePlus" id="Q8K305"/>
<dbReference type="PaxDb" id="10090-ENSMUSP00000077380"/>
<dbReference type="PeptideAtlas" id="Q8K305"/>
<dbReference type="ProteomicsDB" id="253023"/>
<dbReference type="Pumba" id="Q8K305"/>
<dbReference type="AGR" id="MGI:2685830"/>
<dbReference type="MGI" id="MGI:2685830">
    <property type="gene designation" value="Nsl1"/>
</dbReference>
<dbReference type="eggNOG" id="ENOG502S001">
    <property type="taxonomic scope" value="Eukaryota"/>
</dbReference>
<dbReference type="InParanoid" id="Q8K305"/>
<dbReference type="PhylomeDB" id="Q8K305"/>
<dbReference type="Reactome" id="R-MMU-141444">
    <property type="pathway name" value="Amplification of signal from unattached kinetochores via a MAD2 inhibitory signal"/>
</dbReference>
<dbReference type="Reactome" id="R-MMU-2467813">
    <property type="pathway name" value="Separation of Sister Chromatids"/>
</dbReference>
<dbReference type="Reactome" id="R-MMU-2500257">
    <property type="pathway name" value="Resolution of Sister Chromatid Cohesion"/>
</dbReference>
<dbReference type="Reactome" id="R-MMU-5663220">
    <property type="pathway name" value="RHO GTPases Activate Formins"/>
</dbReference>
<dbReference type="Reactome" id="R-MMU-68877">
    <property type="pathway name" value="Mitotic Prometaphase"/>
</dbReference>
<dbReference type="Reactome" id="R-MMU-9648025">
    <property type="pathway name" value="EML4 and NUDC in mitotic spindle formation"/>
</dbReference>
<dbReference type="ChiTaRS" id="Nsl1">
    <property type="organism name" value="mouse"/>
</dbReference>
<dbReference type="PRO" id="PR:Q8K305"/>
<dbReference type="Proteomes" id="UP000000589">
    <property type="component" value="Unplaced"/>
</dbReference>
<dbReference type="RNAct" id="Q8K305">
    <property type="molecule type" value="protein"/>
</dbReference>
<dbReference type="GO" id="GO:0000776">
    <property type="term" value="C:kinetochore"/>
    <property type="evidence" value="ECO:0000303"/>
    <property type="project" value="ComplexPortal"/>
</dbReference>
<dbReference type="GO" id="GO:0000444">
    <property type="term" value="C:MIS12/MIND type complex"/>
    <property type="evidence" value="ECO:0000250"/>
    <property type="project" value="UniProtKB"/>
</dbReference>
<dbReference type="GO" id="GO:0005634">
    <property type="term" value="C:nucleus"/>
    <property type="evidence" value="ECO:0000303"/>
    <property type="project" value="ComplexPortal"/>
</dbReference>
<dbReference type="GO" id="GO:0000922">
    <property type="term" value="C:spindle pole"/>
    <property type="evidence" value="ECO:0000303"/>
    <property type="project" value="ComplexPortal"/>
</dbReference>
<dbReference type="GO" id="GO:0008608">
    <property type="term" value="P:attachment of spindle microtubules to kinetochore"/>
    <property type="evidence" value="ECO:0000303"/>
    <property type="project" value="ComplexPortal"/>
</dbReference>
<dbReference type="GO" id="GO:0051301">
    <property type="term" value="P:cell division"/>
    <property type="evidence" value="ECO:0007669"/>
    <property type="project" value="UniProtKB-KW"/>
</dbReference>
<dbReference type="GO" id="GO:0000070">
    <property type="term" value="P:mitotic sister chromatid segregation"/>
    <property type="evidence" value="ECO:0007669"/>
    <property type="project" value="InterPro"/>
</dbReference>
<dbReference type="InterPro" id="IPR013950">
    <property type="entry name" value="Mis14/Nsl1"/>
</dbReference>
<dbReference type="PANTHER" id="PTHR31749">
    <property type="entry name" value="KINETOCHORE-ASSOCIATED PROTEIN NSL1 HOMOLOG"/>
    <property type="match status" value="1"/>
</dbReference>
<dbReference type="PANTHER" id="PTHR31749:SF3">
    <property type="entry name" value="KINETOCHORE-ASSOCIATED PROTEIN NSL1 HOMOLOG"/>
    <property type="match status" value="1"/>
</dbReference>
<dbReference type="Pfam" id="PF08641">
    <property type="entry name" value="Mis14"/>
    <property type="match status" value="1"/>
</dbReference>
<keyword id="KW-0131">Cell cycle</keyword>
<keyword id="KW-0132">Cell division</keyword>
<keyword id="KW-0137">Centromere</keyword>
<keyword id="KW-0158">Chromosome</keyword>
<keyword id="KW-0159">Chromosome partition</keyword>
<keyword id="KW-0995">Kinetochore</keyword>
<keyword id="KW-0498">Mitosis</keyword>
<keyword id="KW-0539">Nucleus</keyword>
<keyword id="KW-1185">Reference proteome</keyword>
<gene>
    <name type="primary">Nsl1</name>
</gene>
<organism>
    <name type="scientific">Mus musculus</name>
    <name type="common">Mouse</name>
    <dbReference type="NCBI Taxonomy" id="10090"/>
    <lineage>
        <taxon>Eukaryota</taxon>
        <taxon>Metazoa</taxon>
        <taxon>Chordata</taxon>
        <taxon>Craniata</taxon>
        <taxon>Vertebrata</taxon>
        <taxon>Euteleostomi</taxon>
        <taxon>Mammalia</taxon>
        <taxon>Eutheria</taxon>
        <taxon>Euarchontoglires</taxon>
        <taxon>Glires</taxon>
        <taxon>Rodentia</taxon>
        <taxon>Myomorpha</taxon>
        <taxon>Muroidea</taxon>
        <taxon>Muridae</taxon>
        <taxon>Murinae</taxon>
        <taxon>Mus</taxon>
        <taxon>Mus</taxon>
    </lineage>
</organism>
<proteinExistence type="evidence at transcript level"/>
<feature type="chain" id="PRO_0000089261" description="Kinetochore-associated protein NSL1 homolog">
    <location>
        <begin position="1"/>
        <end position="281"/>
    </location>
</feature>
<feature type="region of interest" description="Disordered" evidence="3">
    <location>
        <begin position="11"/>
        <end position="30"/>
    </location>
</feature>
<feature type="compositionally biased region" description="Low complexity" evidence="3">
    <location>
        <begin position="19"/>
        <end position="30"/>
    </location>
</feature>